<evidence type="ECO:0000250" key="1"/>
<evidence type="ECO:0000255" key="2">
    <source>
        <dbReference type="PROSITE-ProRule" id="PRU01258"/>
    </source>
</evidence>
<evidence type="ECO:0000269" key="3">
    <source>
    </source>
</evidence>
<evidence type="ECO:0000305" key="4"/>
<dbReference type="EMBL" id="AF102239">
    <property type="protein sequence ID" value="AAC99420.1"/>
    <property type="molecule type" value="mRNA"/>
</dbReference>
<dbReference type="EMBL" id="AE014298">
    <property type="protein sequence ID" value="AAF46534.1"/>
    <property type="molecule type" value="Genomic_DNA"/>
</dbReference>
<dbReference type="EMBL" id="AE014298">
    <property type="protein sequence ID" value="AAN09618.1"/>
    <property type="molecule type" value="Genomic_DNA"/>
</dbReference>
<dbReference type="EMBL" id="AY070943">
    <property type="protein sequence ID" value="AAL48565.1"/>
    <property type="molecule type" value="mRNA"/>
</dbReference>
<dbReference type="EMBL" id="BT003236">
    <property type="protein sequence ID" value="AAO24992.1"/>
    <property type="molecule type" value="mRNA"/>
</dbReference>
<dbReference type="RefSeq" id="NP_001285068.1">
    <property type="nucleotide sequence ID" value="NM_001298139.1"/>
</dbReference>
<dbReference type="RefSeq" id="NP_511101.2">
    <property type="nucleotide sequence ID" value="NM_078546.4"/>
</dbReference>
<dbReference type="RefSeq" id="NP_727374.1">
    <property type="nucleotide sequence ID" value="NM_167207.3"/>
</dbReference>
<dbReference type="SMR" id="Q9W303"/>
<dbReference type="BioGRID" id="58363">
    <property type="interactions" value="10"/>
</dbReference>
<dbReference type="FunCoup" id="Q9W303">
    <property type="interactions" value="59"/>
</dbReference>
<dbReference type="IntAct" id="Q9W303">
    <property type="interactions" value="18"/>
</dbReference>
<dbReference type="STRING" id="7227.FBpp0309782"/>
<dbReference type="CAZy" id="GH18">
    <property type="family name" value="Glycoside Hydrolase Family 18"/>
</dbReference>
<dbReference type="GlyCosmos" id="Q9W303">
    <property type="glycosylation" value="1 site, No reported glycans"/>
</dbReference>
<dbReference type="GlyGen" id="Q9W303">
    <property type="glycosylation" value="1 site"/>
</dbReference>
<dbReference type="PaxDb" id="7227-FBpp0071328"/>
<dbReference type="DNASU" id="31926"/>
<dbReference type="EnsemblMetazoa" id="FBtr0071393">
    <property type="protein sequence ID" value="FBpp0071328"/>
    <property type="gene ID" value="FBgn0026415"/>
</dbReference>
<dbReference type="EnsemblMetazoa" id="FBtr0071394">
    <property type="protein sequence ID" value="FBpp0071329"/>
    <property type="gene ID" value="FBgn0026415"/>
</dbReference>
<dbReference type="EnsemblMetazoa" id="FBtr0343030">
    <property type="protein sequence ID" value="FBpp0309782"/>
    <property type="gene ID" value="FBgn0026415"/>
</dbReference>
<dbReference type="GeneID" id="31926"/>
<dbReference type="KEGG" id="dme:Dmel_CG1780"/>
<dbReference type="AGR" id="FB:FBgn0026415"/>
<dbReference type="CTD" id="31926"/>
<dbReference type="FlyBase" id="FBgn0026415">
    <property type="gene designation" value="Idgf4"/>
</dbReference>
<dbReference type="VEuPathDB" id="VectorBase:FBgn0026415"/>
<dbReference type="eggNOG" id="KOG2806">
    <property type="taxonomic scope" value="Eukaryota"/>
</dbReference>
<dbReference type="HOGENOM" id="CLU_002833_3_2_1"/>
<dbReference type="InParanoid" id="Q9W303"/>
<dbReference type="OMA" id="WTQNRAP"/>
<dbReference type="OrthoDB" id="76388at2759"/>
<dbReference type="PhylomeDB" id="Q9W303"/>
<dbReference type="Reactome" id="R-DME-6798695">
    <property type="pathway name" value="Neutrophil degranulation"/>
</dbReference>
<dbReference type="BioGRID-ORCS" id="31926">
    <property type="hits" value="0 hits in 1 CRISPR screen"/>
</dbReference>
<dbReference type="ChiTaRS" id="Idgf4">
    <property type="organism name" value="fly"/>
</dbReference>
<dbReference type="GenomeRNAi" id="31926"/>
<dbReference type="PRO" id="PR:Q9W303"/>
<dbReference type="Proteomes" id="UP000000803">
    <property type="component" value="Chromosome X"/>
</dbReference>
<dbReference type="Bgee" id="FBgn0026415">
    <property type="expression patterns" value="Expressed in seminal fluid secreting gland and 198 other cell types or tissues"/>
</dbReference>
<dbReference type="ExpressionAtlas" id="Q9W303">
    <property type="expression patterns" value="baseline and differential"/>
</dbReference>
<dbReference type="GO" id="GO:0005576">
    <property type="term" value="C:extracellular region"/>
    <property type="evidence" value="ECO:0007005"/>
    <property type="project" value="FlyBase"/>
</dbReference>
<dbReference type="GO" id="GO:0008061">
    <property type="term" value="F:chitin binding"/>
    <property type="evidence" value="ECO:0007669"/>
    <property type="project" value="InterPro"/>
</dbReference>
<dbReference type="GO" id="GO:0008084">
    <property type="term" value="F:imaginal disc growth factor receptor binding"/>
    <property type="evidence" value="ECO:0000314"/>
    <property type="project" value="UniProtKB"/>
</dbReference>
<dbReference type="GO" id="GO:0005975">
    <property type="term" value="P:carbohydrate metabolic process"/>
    <property type="evidence" value="ECO:0007669"/>
    <property type="project" value="InterPro"/>
</dbReference>
<dbReference type="GO" id="GO:0006032">
    <property type="term" value="P:chitin catabolic process"/>
    <property type="evidence" value="ECO:0000318"/>
    <property type="project" value="GO_Central"/>
</dbReference>
<dbReference type="GO" id="GO:0040003">
    <property type="term" value="P:chitin-based cuticle development"/>
    <property type="evidence" value="ECO:0000315"/>
    <property type="project" value="FlyBase"/>
</dbReference>
<dbReference type="GO" id="GO:0018990">
    <property type="term" value="P:ecdysis, chitin-based cuticle"/>
    <property type="evidence" value="ECO:0000315"/>
    <property type="project" value="FlyBase"/>
</dbReference>
<dbReference type="GO" id="GO:0007444">
    <property type="term" value="P:imaginal disc development"/>
    <property type="evidence" value="ECO:0000314"/>
    <property type="project" value="UniProtKB"/>
</dbReference>
<dbReference type="GO" id="GO:0042060">
    <property type="term" value="P:wound healing"/>
    <property type="evidence" value="ECO:0000315"/>
    <property type="project" value="FlyBase"/>
</dbReference>
<dbReference type="CDD" id="cd02873">
    <property type="entry name" value="GH18_IDGF"/>
    <property type="match status" value="1"/>
</dbReference>
<dbReference type="FunFam" id="3.10.50.10:FF:000007">
    <property type="entry name" value="chitinase-like protein Idgf4"/>
    <property type="match status" value="1"/>
</dbReference>
<dbReference type="FunFam" id="3.20.20.80:FF:000071">
    <property type="entry name" value="Imaginal disc growth factor"/>
    <property type="match status" value="1"/>
</dbReference>
<dbReference type="Gene3D" id="3.10.50.10">
    <property type="match status" value="1"/>
</dbReference>
<dbReference type="Gene3D" id="3.20.20.80">
    <property type="entry name" value="Glycosidases"/>
    <property type="match status" value="1"/>
</dbReference>
<dbReference type="InterPro" id="IPR011583">
    <property type="entry name" value="Chitinase_II/V-like_cat"/>
</dbReference>
<dbReference type="InterPro" id="IPR029070">
    <property type="entry name" value="Chitinase_insertion_sf"/>
</dbReference>
<dbReference type="InterPro" id="IPR001223">
    <property type="entry name" value="Glyco_hydro18_cat"/>
</dbReference>
<dbReference type="InterPro" id="IPR017853">
    <property type="entry name" value="Glycoside_hydrolase_SF"/>
</dbReference>
<dbReference type="InterPro" id="IPR050314">
    <property type="entry name" value="Glycosyl_Hydrlase_18"/>
</dbReference>
<dbReference type="InterPro" id="IPR015520">
    <property type="entry name" value="IDGF"/>
</dbReference>
<dbReference type="PANTHER" id="PTHR11177">
    <property type="entry name" value="CHITINASE"/>
    <property type="match status" value="1"/>
</dbReference>
<dbReference type="PANTHER" id="PTHR11177:SF235">
    <property type="entry name" value="CHITINASE-LIKE PROTEIN IDGF1-RELATED"/>
    <property type="match status" value="1"/>
</dbReference>
<dbReference type="Pfam" id="PF00704">
    <property type="entry name" value="Glyco_hydro_18"/>
    <property type="match status" value="1"/>
</dbReference>
<dbReference type="SMART" id="SM00636">
    <property type="entry name" value="Glyco_18"/>
    <property type="match status" value="1"/>
</dbReference>
<dbReference type="SUPFAM" id="SSF51445">
    <property type="entry name" value="(Trans)glycosidases"/>
    <property type="match status" value="1"/>
</dbReference>
<dbReference type="SUPFAM" id="SSF54556">
    <property type="entry name" value="Chitinase insertion domain"/>
    <property type="match status" value="1"/>
</dbReference>
<dbReference type="PROSITE" id="PS51910">
    <property type="entry name" value="GH18_2"/>
    <property type="match status" value="1"/>
</dbReference>
<reference key="1">
    <citation type="journal article" date="1999" name="Development">
        <title>A new family of growth factors produced by the fat body and active on Drosophila imaginal disc cells.</title>
        <authorList>
            <person name="Kawamura K."/>
            <person name="Shibata T."/>
            <person name="Saget O."/>
            <person name="Peel D."/>
            <person name="Bryant P.J."/>
        </authorList>
    </citation>
    <scope>NUCLEOTIDE SEQUENCE [MRNA]</scope>
    <scope>FUNCTION</scope>
    <scope>SUBCELLULAR LOCATION</scope>
    <scope>TISSUE SPECIFICITY</scope>
    <scope>DEVELOPMENTAL STAGE</scope>
    <source>
        <tissue>Larva</tissue>
    </source>
</reference>
<reference key="2">
    <citation type="journal article" date="2000" name="Science">
        <title>The genome sequence of Drosophila melanogaster.</title>
        <authorList>
            <person name="Adams M.D."/>
            <person name="Celniker S.E."/>
            <person name="Holt R.A."/>
            <person name="Evans C.A."/>
            <person name="Gocayne J.D."/>
            <person name="Amanatides P.G."/>
            <person name="Scherer S.E."/>
            <person name="Li P.W."/>
            <person name="Hoskins R.A."/>
            <person name="Galle R.F."/>
            <person name="George R.A."/>
            <person name="Lewis S.E."/>
            <person name="Richards S."/>
            <person name="Ashburner M."/>
            <person name="Henderson S.N."/>
            <person name="Sutton G.G."/>
            <person name="Wortman J.R."/>
            <person name="Yandell M.D."/>
            <person name="Zhang Q."/>
            <person name="Chen L.X."/>
            <person name="Brandon R.C."/>
            <person name="Rogers Y.-H.C."/>
            <person name="Blazej R.G."/>
            <person name="Champe M."/>
            <person name="Pfeiffer B.D."/>
            <person name="Wan K.H."/>
            <person name="Doyle C."/>
            <person name="Baxter E.G."/>
            <person name="Helt G."/>
            <person name="Nelson C.R."/>
            <person name="Miklos G.L.G."/>
            <person name="Abril J.F."/>
            <person name="Agbayani A."/>
            <person name="An H.-J."/>
            <person name="Andrews-Pfannkoch C."/>
            <person name="Baldwin D."/>
            <person name="Ballew R.M."/>
            <person name="Basu A."/>
            <person name="Baxendale J."/>
            <person name="Bayraktaroglu L."/>
            <person name="Beasley E.M."/>
            <person name="Beeson K.Y."/>
            <person name="Benos P.V."/>
            <person name="Berman B.P."/>
            <person name="Bhandari D."/>
            <person name="Bolshakov S."/>
            <person name="Borkova D."/>
            <person name="Botchan M.R."/>
            <person name="Bouck J."/>
            <person name="Brokstein P."/>
            <person name="Brottier P."/>
            <person name="Burtis K.C."/>
            <person name="Busam D.A."/>
            <person name="Butler H."/>
            <person name="Cadieu E."/>
            <person name="Center A."/>
            <person name="Chandra I."/>
            <person name="Cherry J.M."/>
            <person name="Cawley S."/>
            <person name="Dahlke C."/>
            <person name="Davenport L.B."/>
            <person name="Davies P."/>
            <person name="de Pablos B."/>
            <person name="Delcher A."/>
            <person name="Deng Z."/>
            <person name="Mays A.D."/>
            <person name="Dew I."/>
            <person name="Dietz S.M."/>
            <person name="Dodson K."/>
            <person name="Doup L.E."/>
            <person name="Downes M."/>
            <person name="Dugan-Rocha S."/>
            <person name="Dunkov B.C."/>
            <person name="Dunn P."/>
            <person name="Durbin K.J."/>
            <person name="Evangelista C.C."/>
            <person name="Ferraz C."/>
            <person name="Ferriera S."/>
            <person name="Fleischmann W."/>
            <person name="Fosler C."/>
            <person name="Gabrielian A.E."/>
            <person name="Garg N.S."/>
            <person name="Gelbart W.M."/>
            <person name="Glasser K."/>
            <person name="Glodek A."/>
            <person name="Gong F."/>
            <person name="Gorrell J.H."/>
            <person name="Gu Z."/>
            <person name="Guan P."/>
            <person name="Harris M."/>
            <person name="Harris N.L."/>
            <person name="Harvey D.A."/>
            <person name="Heiman T.J."/>
            <person name="Hernandez J.R."/>
            <person name="Houck J."/>
            <person name="Hostin D."/>
            <person name="Houston K.A."/>
            <person name="Howland T.J."/>
            <person name="Wei M.-H."/>
            <person name="Ibegwam C."/>
            <person name="Jalali M."/>
            <person name="Kalush F."/>
            <person name="Karpen G.H."/>
            <person name="Ke Z."/>
            <person name="Kennison J.A."/>
            <person name="Ketchum K.A."/>
            <person name="Kimmel B.E."/>
            <person name="Kodira C.D."/>
            <person name="Kraft C.L."/>
            <person name="Kravitz S."/>
            <person name="Kulp D."/>
            <person name="Lai Z."/>
            <person name="Lasko P."/>
            <person name="Lei Y."/>
            <person name="Levitsky A.A."/>
            <person name="Li J.H."/>
            <person name="Li Z."/>
            <person name="Liang Y."/>
            <person name="Lin X."/>
            <person name="Liu X."/>
            <person name="Mattei B."/>
            <person name="McIntosh T.C."/>
            <person name="McLeod M.P."/>
            <person name="McPherson D."/>
            <person name="Merkulov G."/>
            <person name="Milshina N.V."/>
            <person name="Mobarry C."/>
            <person name="Morris J."/>
            <person name="Moshrefi A."/>
            <person name="Mount S.M."/>
            <person name="Moy M."/>
            <person name="Murphy B."/>
            <person name="Murphy L."/>
            <person name="Muzny D.M."/>
            <person name="Nelson D.L."/>
            <person name="Nelson D.R."/>
            <person name="Nelson K.A."/>
            <person name="Nixon K."/>
            <person name="Nusskern D.R."/>
            <person name="Pacleb J.M."/>
            <person name="Palazzolo M."/>
            <person name="Pittman G.S."/>
            <person name="Pan S."/>
            <person name="Pollard J."/>
            <person name="Puri V."/>
            <person name="Reese M.G."/>
            <person name="Reinert K."/>
            <person name="Remington K."/>
            <person name="Saunders R.D.C."/>
            <person name="Scheeler F."/>
            <person name="Shen H."/>
            <person name="Shue B.C."/>
            <person name="Siden-Kiamos I."/>
            <person name="Simpson M."/>
            <person name="Skupski M.P."/>
            <person name="Smith T.J."/>
            <person name="Spier E."/>
            <person name="Spradling A.C."/>
            <person name="Stapleton M."/>
            <person name="Strong R."/>
            <person name="Sun E."/>
            <person name="Svirskas R."/>
            <person name="Tector C."/>
            <person name="Turner R."/>
            <person name="Venter E."/>
            <person name="Wang A.H."/>
            <person name="Wang X."/>
            <person name="Wang Z.-Y."/>
            <person name="Wassarman D.A."/>
            <person name="Weinstock G.M."/>
            <person name="Weissenbach J."/>
            <person name="Williams S.M."/>
            <person name="Woodage T."/>
            <person name="Worley K.C."/>
            <person name="Wu D."/>
            <person name="Yang S."/>
            <person name="Yao Q.A."/>
            <person name="Ye J."/>
            <person name="Yeh R.-F."/>
            <person name="Zaveri J.S."/>
            <person name="Zhan M."/>
            <person name="Zhang G."/>
            <person name="Zhao Q."/>
            <person name="Zheng L."/>
            <person name="Zheng X.H."/>
            <person name="Zhong F.N."/>
            <person name="Zhong W."/>
            <person name="Zhou X."/>
            <person name="Zhu S.C."/>
            <person name="Zhu X."/>
            <person name="Smith H.O."/>
            <person name="Gibbs R.A."/>
            <person name="Myers E.W."/>
            <person name="Rubin G.M."/>
            <person name="Venter J.C."/>
        </authorList>
    </citation>
    <scope>NUCLEOTIDE SEQUENCE [LARGE SCALE GENOMIC DNA]</scope>
    <source>
        <strain>Berkeley</strain>
    </source>
</reference>
<reference key="3">
    <citation type="journal article" date="2002" name="Genome Biol.">
        <title>Annotation of the Drosophila melanogaster euchromatic genome: a systematic review.</title>
        <authorList>
            <person name="Misra S."/>
            <person name="Crosby M.A."/>
            <person name="Mungall C.J."/>
            <person name="Matthews B.B."/>
            <person name="Campbell K.S."/>
            <person name="Hradecky P."/>
            <person name="Huang Y."/>
            <person name="Kaminker J.S."/>
            <person name="Millburn G.H."/>
            <person name="Prochnik S.E."/>
            <person name="Smith C.D."/>
            <person name="Tupy J.L."/>
            <person name="Whitfield E.J."/>
            <person name="Bayraktaroglu L."/>
            <person name="Berman B.P."/>
            <person name="Bettencourt B.R."/>
            <person name="Celniker S.E."/>
            <person name="de Grey A.D.N.J."/>
            <person name="Drysdale R.A."/>
            <person name="Harris N.L."/>
            <person name="Richter J."/>
            <person name="Russo S."/>
            <person name="Schroeder A.J."/>
            <person name="Shu S.Q."/>
            <person name="Stapleton M."/>
            <person name="Yamada C."/>
            <person name="Ashburner M."/>
            <person name="Gelbart W.M."/>
            <person name="Rubin G.M."/>
            <person name="Lewis S.E."/>
        </authorList>
    </citation>
    <scope>GENOME REANNOTATION</scope>
    <source>
        <strain>Berkeley</strain>
    </source>
</reference>
<reference key="4">
    <citation type="journal article" date="2002" name="Genome Biol.">
        <title>A Drosophila full-length cDNA resource.</title>
        <authorList>
            <person name="Stapleton M."/>
            <person name="Carlson J.W."/>
            <person name="Brokstein P."/>
            <person name="Yu C."/>
            <person name="Champe M."/>
            <person name="George R.A."/>
            <person name="Guarin H."/>
            <person name="Kronmiller B."/>
            <person name="Pacleb J.M."/>
            <person name="Park S."/>
            <person name="Wan K.H."/>
            <person name="Rubin G.M."/>
            <person name="Celniker S.E."/>
        </authorList>
    </citation>
    <scope>NUCLEOTIDE SEQUENCE [LARGE SCALE MRNA]</scope>
    <source>
        <strain>Berkeley</strain>
        <tissue>Embryo</tissue>
    </source>
</reference>
<reference key="5">
    <citation type="submission" date="2003-01" db="EMBL/GenBank/DDBJ databases">
        <authorList>
            <person name="Stapleton M."/>
            <person name="Brokstein P."/>
            <person name="Hong L."/>
            <person name="Agbayani A."/>
            <person name="Carlson J.W."/>
            <person name="Champe M."/>
            <person name="Chavez C."/>
            <person name="Dorsett V."/>
            <person name="Dresnek D."/>
            <person name="Farfan D."/>
            <person name="Frise E."/>
            <person name="George R.A."/>
            <person name="Gonzalez M."/>
            <person name="Guarin H."/>
            <person name="Kronmiller B."/>
            <person name="Li P.W."/>
            <person name="Liao G."/>
            <person name="Miranda A."/>
            <person name="Mungall C.J."/>
            <person name="Nunoo J."/>
            <person name="Pacleb J.M."/>
            <person name="Paragas V."/>
            <person name="Park S."/>
            <person name="Patel S."/>
            <person name="Phouanenavong S."/>
            <person name="Wan K.H."/>
            <person name="Yu C."/>
            <person name="Lewis S.E."/>
            <person name="Rubin G.M."/>
            <person name="Celniker S.E."/>
        </authorList>
    </citation>
    <scope>NUCLEOTIDE SEQUENCE [LARGE SCALE MRNA]</scope>
    <source>
        <strain>Berkeley</strain>
        <tissue>Larva</tissue>
        <tissue>Pupae</tissue>
    </source>
</reference>
<protein>
    <recommendedName>
        <fullName>Chitinase-like protein Idgf4</fullName>
    </recommendedName>
    <alternativeName>
        <fullName>Imaginal disk growth factor protein 4</fullName>
    </alternativeName>
</protein>
<name>IDGF4_DROME</name>
<feature type="signal peptide" evidence="1">
    <location>
        <begin position="1"/>
        <end position="21"/>
    </location>
</feature>
<feature type="chain" id="PRO_0000011987" description="Chitinase-like protein Idgf4">
    <location>
        <begin position="22"/>
        <end position="442"/>
    </location>
</feature>
<feature type="domain" description="GH18" evidence="2">
    <location>
        <begin position="25"/>
        <end position="442"/>
    </location>
</feature>
<feature type="glycosylation site" description="N-linked (GlcNAc...) asparagine" evidence="1">
    <location>
        <position position="224"/>
    </location>
</feature>
<feature type="disulfide bond" evidence="2">
    <location>
        <begin position="29"/>
        <end position="56"/>
    </location>
</feature>
<feature type="disulfide bond" evidence="1">
    <location>
        <begin position="343"/>
        <end position="426"/>
    </location>
</feature>
<feature type="sequence conflict" description="In Ref. 1; AAC99420." evidence="4" ref="1">
    <original>L</original>
    <variation>P</variation>
    <location>
        <position position="80"/>
    </location>
</feature>
<feature type="sequence conflict" description="In Ref. 1; AAC99420." evidence="4" ref="1">
    <original>V</original>
    <variation>L</variation>
    <location>
        <position position="185"/>
    </location>
</feature>
<feature type="sequence conflict" description="In Ref. 1; AAC99420." evidence="4" ref="1">
    <original>R</original>
    <variation>P</variation>
    <location>
        <position position="377"/>
    </location>
</feature>
<accession>Q9W303</accession>
<accession>A4V476</accession>
<accession>O96667</accession>
<proteinExistence type="evidence at transcript level"/>
<sequence length="442" mass="48604">MKLYALFSLLVGSLAIGQISAAGSHHLLCYYDGNSFVREGLSKLILTDLEPALQYCTHLVYGYAGINPSSNKLVSNNEKLDLDLGSSLFRQVTGLKRKYPALKVLLSVGGDKDTVDPENNKYLTLLESSNARIPFINSAHSLVKTYGFDGLDLGWQFPKNKPKKVHGSIGKFWKGFKKIFSGDHVVDEKAEEHKEAFTALVRELKNAFRPDGYILGLSVLPNVNSSLFFDVPAIINNLDYVNLHTYDFQTPERNNEVADFPAPIYELNERNPEFNVNYQVKYWTGNRAPAAKINVGIATYGRAWKLTKDSGLTGLPPVAEADGVAPAGTQTQIPGLLSWPEVCAKLPNPANQHLKGADGPLRKVGDPTKRFGSYAYRSADDSGENGVWVGYEDPDTAAIKAEYVKREGLGGIAVVDLSFDDFRGGCTGHDKFPILRQVKSKL</sequence>
<keyword id="KW-0217">Developmental protein</keyword>
<keyword id="KW-1015">Disulfide bond</keyword>
<keyword id="KW-0325">Glycoprotein</keyword>
<keyword id="KW-1185">Reference proteome</keyword>
<keyword id="KW-0964">Secreted</keyword>
<keyword id="KW-0732">Signal</keyword>
<gene>
    <name type="primary">Idgf4</name>
    <name type="ORF">CG1780</name>
</gene>
<comment type="function">
    <text evidence="3">Cooperates with insulin-like peptides to stimulate the proliferation, polarization and motility of imaginal disk cells. May act by stabilizing the binding of insulin-like peptides to its receptor through a simultaneous interaction with both molecules to form a multiprotein signaling complex.</text>
</comment>
<comment type="subcellular location">
    <subcellularLocation>
        <location evidence="3">Secreted</location>
    </subcellularLocation>
    <text>Secreted in hemolymph. It is probably transported to target tissues via hemolymph.</text>
</comment>
<comment type="tissue specificity">
    <text evidence="3">Primarily expressed in yolk cells and fat body. In larvae, it is expressed in the imaginal ring, the salivary duct, large salivary gland cells and weakly expressed in imaginal disks. More strongly expressed than Idgf1 and Idgf3.</text>
</comment>
<comment type="developmental stage">
    <text evidence="3">Expressed both maternally and zygotically. Expressed throughout development, with a much stronger expression during larval stages.</text>
</comment>
<comment type="PTM">
    <text evidence="1">Glycosylated.</text>
</comment>
<comment type="miscellaneous">
    <text>Lacks the typical Glu active site in position 156 that is replaced by a Gln residue, preventing the hydrolase activity. Its precise function remains unclear.</text>
</comment>
<comment type="similarity">
    <text evidence="4">Belongs to the glycosyl hydrolase 18 family. IDGF subfamily.</text>
</comment>
<organism>
    <name type="scientific">Drosophila melanogaster</name>
    <name type="common">Fruit fly</name>
    <dbReference type="NCBI Taxonomy" id="7227"/>
    <lineage>
        <taxon>Eukaryota</taxon>
        <taxon>Metazoa</taxon>
        <taxon>Ecdysozoa</taxon>
        <taxon>Arthropoda</taxon>
        <taxon>Hexapoda</taxon>
        <taxon>Insecta</taxon>
        <taxon>Pterygota</taxon>
        <taxon>Neoptera</taxon>
        <taxon>Endopterygota</taxon>
        <taxon>Diptera</taxon>
        <taxon>Brachycera</taxon>
        <taxon>Muscomorpha</taxon>
        <taxon>Ephydroidea</taxon>
        <taxon>Drosophilidae</taxon>
        <taxon>Drosophila</taxon>
        <taxon>Sophophora</taxon>
    </lineage>
</organism>